<protein>
    <recommendedName>
        <fullName evidence="1">L-lactate dehydrogenase</fullName>
        <ecNumber evidence="1">1.1.-.-</ecNumber>
    </recommendedName>
</protein>
<sequence>MIISAASDYRAAAQRILPPFLFHYMDGGAYSEYTLRRNVEDLSEVALRQRILKNMSDLSLETTLFNEKLSMPVALAPVGLCGMYARRGEVQAAKAADAHGIPFTLSTVSVCPIEEVAPAIKRPMWFQLYVLRDRGFMRNALERAKAAGCSTLVFTVDMPTPGARYRDAHSGMSGPNAAMRRYLQAVTHPQWAWDVGLNGRPHDLGNISAYLGKPTGLEDYIGWLGNNFDPSISWKDLEWIRDFWDGPMVIKGILDPEDARDAVRFGADGIVVSNHGGRQLDGVLSSARALPAIADAVKGDIAILADSGIRNGLDVVRMIALGADTVLLGRAFLYALATAGQAGVANLLNLIEKEMKVAMTLTGAKSISEITQDSLVQGLGKELPAALAPMAKGNAA</sequence>
<feature type="chain" id="PRO_0000383421" description="L-lactate dehydrogenase">
    <location>
        <begin position="1"/>
        <end position="396"/>
    </location>
</feature>
<feature type="domain" description="FMN hydroxy acid dehydrogenase" evidence="1">
    <location>
        <begin position="1"/>
        <end position="380"/>
    </location>
</feature>
<feature type="active site" description="Proton acceptor" evidence="1">
    <location>
        <position position="275"/>
    </location>
</feature>
<feature type="binding site" evidence="1">
    <location>
        <position position="24"/>
    </location>
    <ligand>
        <name>substrate</name>
    </ligand>
</feature>
<feature type="binding site" evidence="1">
    <location>
        <position position="106"/>
    </location>
    <ligand>
        <name>FMN</name>
        <dbReference type="ChEBI" id="CHEBI:58210"/>
    </ligand>
</feature>
<feature type="binding site" evidence="1">
    <location>
        <position position="127"/>
    </location>
    <ligand>
        <name>FMN</name>
        <dbReference type="ChEBI" id="CHEBI:58210"/>
    </ligand>
</feature>
<feature type="binding site" evidence="1">
    <location>
        <position position="129"/>
    </location>
    <ligand>
        <name>substrate</name>
    </ligand>
</feature>
<feature type="binding site" evidence="1">
    <location>
        <position position="155"/>
    </location>
    <ligand>
        <name>FMN</name>
        <dbReference type="ChEBI" id="CHEBI:58210"/>
    </ligand>
</feature>
<feature type="binding site" evidence="1">
    <location>
        <position position="164"/>
    </location>
    <ligand>
        <name>substrate</name>
    </ligand>
</feature>
<feature type="binding site" evidence="1">
    <location>
        <position position="251"/>
    </location>
    <ligand>
        <name>FMN</name>
        <dbReference type="ChEBI" id="CHEBI:58210"/>
    </ligand>
</feature>
<feature type="binding site" evidence="1">
    <location>
        <position position="278"/>
    </location>
    <ligand>
        <name>substrate</name>
    </ligand>
</feature>
<feature type="binding site" evidence="1">
    <location>
        <begin position="306"/>
        <end position="330"/>
    </location>
    <ligand>
        <name>FMN</name>
        <dbReference type="ChEBI" id="CHEBI:58210"/>
    </ligand>
</feature>
<evidence type="ECO:0000255" key="1">
    <source>
        <dbReference type="HAMAP-Rule" id="MF_01559"/>
    </source>
</evidence>
<name>LLDD_ECODH</name>
<organism>
    <name type="scientific">Escherichia coli (strain K12 / DH10B)</name>
    <dbReference type="NCBI Taxonomy" id="316385"/>
    <lineage>
        <taxon>Bacteria</taxon>
        <taxon>Pseudomonadati</taxon>
        <taxon>Pseudomonadota</taxon>
        <taxon>Gammaproteobacteria</taxon>
        <taxon>Enterobacterales</taxon>
        <taxon>Enterobacteriaceae</taxon>
        <taxon>Escherichia</taxon>
    </lineage>
</organism>
<dbReference type="EC" id="1.1.-.-" evidence="1"/>
<dbReference type="EMBL" id="CP000948">
    <property type="protein sequence ID" value="ACB04655.1"/>
    <property type="molecule type" value="Genomic_DNA"/>
</dbReference>
<dbReference type="RefSeq" id="WP_000586962.1">
    <property type="nucleotide sequence ID" value="NC_010473.1"/>
</dbReference>
<dbReference type="SMR" id="B1X8M0"/>
<dbReference type="KEGG" id="ecd:ECDH10B_3787"/>
<dbReference type="HOGENOM" id="CLU_020639_0_0_6"/>
<dbReference type="GO" id="GO:0005886">
    <property type="term" value="C:plasma membrane"/>
    <property type="evidence" value="ECO:0007669"/>
    <property type="project" value="UniProtKB-SubCell"/>
</dbReference>
<dbReference type="GO" id="GO:0010181">
    <property type="term" value="F:FMN binding"/>
    <property type="evidence" value="ECO:0007669"/>
    <property type="project" value="InterPro"/>
</dbReference>
<dbReference type="GO" id="GO:0004459">
    <property type="term" value="F:L-lactate dehydrogenase activity"/>
    <property type="evidence" value="ECO:0007669"/>
    <property type="project" value="UniProtKB-UniRule"/>
</dbReference>
<dbReference type="GO" id="GO:0009060">
    <property type="term" value="P:aerobic respiration"/>
    <property type="evidence" value="ECO:0007669"/>
    <property type="project" value="TreeGrafter"/>
</dbReference>
<dbReference type="GO" id="GO:0006089">
    <property type="term" value="P:lactate metabolic process"/>
    <property type="evidence" value="ECO:0007669"/>
    <property type="project" value="UniProtKB-UniRule"/>
</dbReference>
<dbReference type="CDD" id="cd02809">
    <property type="entry name" value="alpha_hydroxyacid_oxid_FMN"/>
    <property type="match status" value="1"/>
</dbReference>
<dbReference type="FunFam" id="3.20.20.70:FF:000029">
    <property type="entry name" value="L-lactate dehydrogenase"/>
    <property type="match status" value="1"/>
</dbReference>
<dbReference type="Gene3D" id="3.20.20.70">
    <property type="entry name" value="Aldolase class I"/>
    <property type="match status" value="1"/>
</dbReference>
<dbReference type="HAMAP" id="MF_01559">
    <property type="entry name" value="L_lact_dehydr"/>
    <property type="match status" value="1"/>
</dbReference>
<dbReference type="InterPro" id="IPR013785">
    <property type="entry name" value="Aldolase_TIM"/>
</dbReference>
<dbReference type="InterPro" id="IPR012133">
    <property type="entry name" value="Alpha-hydoxy_acid_DH_FMN"/>
</dbReference>
<dbReference type="InterPro" id="IPR000262">
    <property type="entry name" value="FMN-dep_DH"/>
</dbReference>
<dbReference type="InterPro" id="IPR037396">
    <property type="entry name" value="FMN_HAD"/>
</dbReference>
<dbReference type="InterPro" id="IPR008259">
    <property type="entry name" value="FMN_hydac_DH_AS"/>
</dbReference>
<dbReference type="InterPro" id="IPR020920">
    <property type="entry name" value="LldD"/>
</dbReference>
<dbReference type="NCBIfam" id="NF033901">
    <property type="entry name" value="L_lactate_LldD"/>
    <property type="match status" value="1"/>
</dbReference>
<dbReference type="NCBIfam" id="NF008398">
    <property type="entry name" value="PRK11197.1"/>
    <property type="match status" value="1"/>
</dbReference>
<dbReference type="PANTHER" id="PTHR10578:SF85">
    <property type="entry name" value="L-LACTATE DEHYDROGENASE"/>
    <property type="match status" value="1"/>
</dbReference>
<dbReference type="PANTHER" id="PTHR10578">
    <property type="entry name" value="S -2-HYDROXY-ACID OXIDASE-RELATED"/>
    <property type="match status" value="1"/>
</dbReference>
<dbReference type="Pfam" id="PF01070">
    <property type="entry name" value="FMN_dh"/>
    <property type="match status" value="1"/>
</dbReference>
<dbReference type="PIRSF" id="PIRSF000138">
    <property type="entry name" value="Al-hdrx_acd_dh"/>
    <property type="match status" value="1"/>
</dbReference>
<dbReference type="SUPFAM" id="SSF51395">
    <property type="entry name" value="FMN-linked oxidoreductases"/>
    <property type="match status" value="1"/>
</dbReference>
<dbReference type="PROSITE" id="PS00557">
    <property type="entry name" value="FMN_HYDROXY_ACID_DH_1"/>
    <property type="match status" value="1"/>
</dbReference>
<dbReference type="PROSITE" id="PS51349">
    <property type="entry name" value="FMN_HYDROXY_ACID_DH_2"/>
    <property type="match status" value="1"/>
</dbReference>
<keyword id="KW-0997">Cell inner membrane</keyword>
<keyword id="KW-1003">Cell membrane</keyword>
<keyword id="KW-0285">Flavoprotein</keyword>
<keyword id="KW-0288">FMN</keyword>
<keyword id="KW-0472">Membrane</keyword>
<keyword id="KW-0560">Oxidoreductase</keyword>
<accession>B1X8M0</accession>
<comment type="function">
    <text evidence="1">Catalyzes the conversion of L-lactate to pyruvate. Is coupled to the respiratory chain.</text>
</comment>
<comment type="catalytic activity">
    <reaction evidence="1">
        <text>(S)-lactate + A = pyruvate + AH2</text>
        <dbReference type="Rhea" id="RHEA:45816"/>
        <dbReference type="ChEBI" id="CHEBI:13193"/>
        <dbReference type="ChEBI" id="CHEBI:15361"/>
        <dbReference type="ChEBI" id="CHEBI:16651"/>
        <dbReference type="ChEBI" id="CHEBI:17499"/>
    </reaction>
</comment>
<comment type="cofactor">
    <cofactor evidence="1">
        <name>FMN</name>
        <dbReference type="ChEBI" id="CHEBI:58210"/>
    </cofactor>
</comment>
<comment type="subcellular location">
    <subcellularLocation>
        <location evidence="1">Cell inner membrane</location>
        <topology evidence="1">Peripheral membrane protein</topology>
    </subcellularLocation>
</comment>
<comment type="similarity">
    <text evidence="1">Belongs to the FMN-dependent alpha-hydroxy acid dehydrogenase family.</text>
</comment>
<proteinExistence type="inferred from homology"/>
<gene>
    <name evidence="1" type="primary">lldD</name>
    <name type="ordered locus">ECDH10B_3787</name>
</gene>
<reference key="1">
    <citation type="journal article" date="2008" name="J. Bacteriol.">
        <title>The complete genome sequence of Escherichia coli DH10B: insights into the biology of a laboratory workhorse.</title>
        <authorList>
            <person name="Durfee T."/>
            <person name="Nelson R."/>
            <person name="Baldwin S."/>
            <person name="Plunkett G. III"/>
            <person name="Burland V."/>
            <person name="Mau B."/>
            <person name="Petrosino J.F."/>
            <person name="Qin X."/>
            <person name="Muzny D.M."/>
            <person name="Ayele M."/>
            <person name="Gibbs R.A."/>
            <person name="Csorgo B."/>
            <person name="Posfai G."/>
            <person name="Weinstock G.M."/>
            <person name="Blattner F.R."/>
        </authorList>
    </citation>
    <scope>NUCLEOTIDE SEQUENCE [LARGE SCALE GENOMIC DNA]</scope>
    <source>
        <strain>K12 / DH10B</strain>
    </source>
</reference>